<dbReference type="EC" id="7.1.1.-"/>
<dbReference type="EMBL" id="CP000053">
    <property type="protein sequence ID" value="AAY62108.1"/>
    <property type="molecule type" value="Genomic_DNA"/>
</dbReference>
<dbReference type="SMR" id="Q4UK27"/>
<dbReference type="STRING" id="315456.RF_1257"/>
<dbReference type="KEGG" id="rfe:RF_1257"/>
<dbReference type="eggNOG" id="COG1009">
    <property type="taxonomic scope" value="Bacteria"/>
</dbReference>
<dbReference type="HOGENOM" id="CLU_007100_6_0_5"/>
<dbReference type="OrthoDB" id="9811798at2"/>
<dbReference type="Proteomes" id="UP000008548">
    <property type="component" value="Chromosome"/>
</dbReference>
<dbReference type="GO" id="GO:0005886">
    <property type="term" value="C:plasma membrane"/>
    <property type="evidence" value="ECO:0007669"/>
    <property type="project" value="UniProtKB-SubCell"/>
</dbReference>
<dbReference type="GO" id="GO:0008137">
    <property type="term" value="F:NADH dehydrogenase (ubiquinone) activity"/>
    <property type="evidence" value="ECO:0007669"/>
    <property type="project" value="InterPro"/>
</dbReference>
<dbReference type="GO" id="GO:0048038">
    <property type="term" value="F:quinone binding"/>
    <property type="evidence" value="ECO:0007669"/>
    <property type="project" value="UniProtKB-KW"/>
</dbReference>
<dbReference type="GO" id="GO:0042773">
    <property type="term" value="P:ATP synthesis coupled electron transport"/>
    <property type="evidence" value="ECO:0007669"/>
    <property type="project" value="InterPro"/>
</dbReference>
<dbReference type="GO" id="GO:0015990">
    <property type="term" value="P:electron transport coupled proton transport"/>
    <property type="evidence" value="ECO:0007669"/>
    <property type="project" value="TreeGrafter"/>
</dbReference>
<dbReference type="Gene3D" id="1.20.5.2700">
    <property type="match status" value="1"/>
</dbReference>
<dbReference type="InterPro" id="IPR018393">
    <property type="entry name" value="NADHpl_OxRdtase_5_subgr"/>
</dbReference>
<dbReference type="InterPro" id="IPR001750">
    <property type="entry name" value="ND/Mrp_TM"/>
</dbReference>
<dbReference type="InterPro" id="IPR003945">
    <property type="entry name" value="NU5C-like"/>
</dbReference>
<dbReference type="InterPro" id="IPR001516">
    <property type="entry name" value="Proton_antipo_N"/>
</dbReference>
<dbReference type="NCBIfam" id="TIGR01974">
    <property type="entry name" value="NDH_I_L"/>
    <property type="match status" value="1"/>
</dbReference>
<dbReference type="NCBIfam" id="NF005141">
    <property type="entry name" value="PRK06590.1"/>
    <property type="match status" value="1"/>
</dbReference>
<dbReference type="PANTHER" id="PTHR42829">
    <property type="entry name" value="NADH-UBIQUINONE OXIDOREDUCTASE CHAIN 5"/>
    <property type="match status" value="1"/>
</dbReference>
<dbReference type="PANTHER" id="PTHR42829:SF2">
    <property type="entry name" value="NADH-UBIQUINONE OXIDOREDUCTASE CHAIN 5"/>
    <property type="match status" value="1"/>
</dbReference>
<dbReference type="Pfam" id="PF00361">
    <property type="entry name" value="Proton_antipo_M"/>
    <property type="match status" value="1"/>
</dbReference>
<dbReference type="Pfam" id="PF00662">
    <property type="entry name" value="Proton_antipo_N"/>
    <property type="match status" value="1"/>
</dbReference>
<dbReference type="PRINTS" id="PR01434">
    <property type="entry name" value="NADHDHGNASE5"/>
</dbReference>
<dbReference type="PRINTS" id="PR01435">
    <property type="entry name" value="NPOXDRDTASE5"/>
</dbReference>
<gene>
    <name type="primary">nuoL</name>
    <name type="ordered locus">RF_1257</name>
</gene>
<name>NUOL_RICFE</name>
<accession>Q4UK27</accession>
<organism>
    <name type="scientific">Rickettsia felis (strain ATCC VR-1525 / URRWXCal2)</name>
    <name type="common">Rickettsia azadi</name>
    <dbReference type="NCBI Taxonomy" id="315456"/>
    <lineage>
        <taxon>Bacteria</taxon>
        <taxon>Pseudomonadati</taxon>
        <taxon>Pseudomonadota</taxon>
        <taxon>Alphaproteobacteria</taxon>
        <taxon>Rickettsiales</taxon>
        <taxon>Rickettsiaceae</taxon>
        <taxon>Rickettsieae</taxon>
        <taxon>Rickettsia</taxon>
        <taxon>spotted fever group</taxon>
    </lineage>
</organism>
<feature type="chain" id="PRO_0000287836" description="NADH-quinone oxidoreductase subunit L">
    <location>
        <begin position="1"/>
        <end position="645"/>
    </location>
</feature>
<feature type="transmembrane region" description="Helical" evidence="2">
    <location>
        <begin position="7"/>
        <end position="27"/>
    </location>
</feature>
<feature type="transmembrane region" description="Helical" evidence="2">
    <location>
        <begin position="31"/>
        <end position="51"/>
    </location>
</feature>
<feature type="transmembrane region" description="Helical" evidence="2">
    <location>
        <begin position="88"/>
        <end position="108"/>
    </location>
</feature>
<feature type="transmembrane region" description="Helical" evidence="2">
    <location>
        <begin position="114"/>
        <end position="134"/>
    </location>
</feature>
<feature type="transmembrane region" description="Helical" evidence="2">
    <location>
        <begin position="137"/>
        <end position="157"/>
    </location>
</feature>
<feature type="transmembrane region" description="Helical" evidence="2">
    <location>
        <begin position="177"/>
        <end position="197"/>
    </location>
</feature>
<feature type="transmembrane region" description="Helical" evidence="2">
    <location>
        <begin position="213"/>
        <end position="233"/>
    </location>
</feature>
<feature type="transmembrane region" description="Helical" evidence="2">
    <location>
        <begin position="252"/>
        <end position="272"/>
    </location>
</feature>
<feature type="transmembrane region" description="Helical" evidence="2">
    <location>
        <begin position="284"/>
        <end position="304"/>
    </location>
</feature>
<feature type="transmembrane region" description="Helical" evidence="2">
    <location>
        <begin position="312"/>
        <end position="332"/>
    </location>
</feature>
<feature type="transmembrane region" description="Helical" evidence="2">
    <location>
        <begin position="337"/>
        <end position="357"/>
    </location>
</feature>
<feature type="transmembrane region" description="Helical" evidence="2">
    <location>
        <begin position="380"/>
        <end position="400"/>
    </location>
</feature>
<feature type="transmembrane region" description="Helical" evidence="2">
    <location>
        <begin position="415"/>
        <end position="435"/>
    </location>
</feature>
<feature type="transmembrane region" description="Helical" evidence="2">
    <location>
        <begin position="464"/>
        <end position="484"/>
    </location>
</feature>
<feature type="transmembrane region" description="Helical" evidence="2">
    <location>
        <begin position="510"/>
        <end position="530"/>
    </location>
</feature>
<feature type="transmembrane region" description="Helical" evidence="2">
    <location>
        <begin position="623"/>
        <end position="643"/>
    </location>
</feature>
<sequence>MYQNLAIMIIMLPLASSVINGLFLKVIDTKLAQIIATGFLSLSALFSLVIFCDAGLDGNIIHIKLLPWIEVGNFKVNWSIYIDQLTSIMFIAVTWVSSVVHIYSLGYMAEDKGIIRFLSFLSLFTFFMLMLVSADNFLQLFFGWEGVGVCSYLLIGFWYSKESANKAAIKAFITNRASDFAFILGIITIIVYCGSANYKDVFSSAELLSNTKIFLQFSILDVICLLLFIGCMGKSAQIGLHVWLPDAMEGPTPVSALIHAATMVTAGVFLVARCSYLFEYSPLVLQFITIIGGVTCLFAASIAIMQSDIKKIIAYSTCSQLGYMFMACGVSAYNSGIFHLVTHAFFKALLFLSAGSIIHAVHEQDIFKMGDLRNKMPVTYGNSLIGSLALIGIYPLAGFYSKDSILEAAYSSGSFMFIFGIAAAILTAIYSMKIIMLVFYGKTKLEKDVFEHAHEPAKIMNTPLILLVAGSFFSGMIGYYLLSMDKPNGYFHESLFNLHIYKLLISHPPLYIKLLPMAVGIMGIVIGICVYNSSTIMSFRPSSMSFPRKRESSKPFNLVYNILHNKYYFDEIYNFLIVKPINCLASLFYLGDQKIIDRFGPNGFSRVVNCFSVLTGKTQTGYVFNYALYIVSFIVVVISVFVWKG</sequence>
<evidence type="ECO:0000250" key="1"/>
<evidence type="ECO:0000255" key="2"/>
<evidence type="ECO:0000305" key="3"/>
<comment type="function">
    <text evidence="1">NDH-1 shuttles electrons from NADH, via FMN and iron-sulfur (Fe-S) centers, to quinones in the respiratory chain. Couples the redox reaction to proton translocation (for every two electrons transferred, four hydrogen ions are translocated across the cytoplasmic membrane), and thus conserves the redox energy in a proton gradient (By similarity).</text>
</comment>
<comment type="catalytic activity">
    <reaction>
        <text>a quinone + NADH + 5 H(+)(in) = a quinol + NAD(+) + 4 H(+)(out)</text>
        <dbReference type="Rhea" id="RHEA:57888"/>
        <dbReference type="ChEBI" id="CHEBI:15378"/>
        <dbReference type="ChEBI" id="CHEBI:24646"/>
        <dbReference type="ChEBI" id="CHEBI:57540"/>
        <dbReference type="ChEBI" id="CHEBI:57945"/>
        <dbReference type="ChEBI" id="CHEBI:132124"/>
    </reaction>
</comment>
<comment type="subcellular location">
    <subcellularLocation>
        <location evidence="3">Cell membrane</location>
        <topology evidence="3">Multi-pass membrane protein</topology>
    </subcellularLocation>
</comment>
<comment type="similarity">
    <text evidence="3">Belongs to the complex I subunit 5 family.</text>
</comment>
<keyword id="KW-1003">Cell membrane</keyword>
<keyword id="KW-0472">Membrane</keyword>
<keyword id="KW-0520">NAD</keyword>
<keyword id="KW-0874">Quinone</keyword>
<keyword id="KW-1278">Translocase</keyword>
<keyword id="KW-0812">Transmembrane</keyword>
<keyword id="KW-1133">Transmembrane helix</keyword>
<reference key="1">
    <citation type="journal article" date="2005" name="PLoS Biol.">
        <title>The genome sequence of Rickettsia felis identifies the first putative conjugative plasmid in an obligate intracellular parasite.</title>
        <authorList>
            <person name="Ogata H."/>
            <person name="Renesto P."/>
            <person name="Audic S."/>
            <person name="Robert C."/>
            <person name="Blanc G."/>
            <person name="Fournier P.-E."/>
            <person name="Parinello H."/>
            <person name="Claverie J.-M."/>
            <person name="Raoult D."/>
        </authorList>
    </citation>
    <scope>NUCLEOTIDE SEQUENCE [LARGE SCALE GENOMIC DNA]</scope>
    <source>
        <strain>ATCC VR-1525 / URRWXCal2</strain>
    </source>
</reference>
<proteinExistence type="inferred from homology"/>
<protein>
    <recommendedName>
        <fullName>NADH-quinone oxidoreductase subunit L</fullName>
        <ecNumber>7.1.1.-</ecNumber>
    </recommendedName>
    <alternativeName>
        <fullName>NADH dehydrogenase I subunit L</fullName>
    </alternativeName>
    <alternativeName>
        <fullName>NDH-1 subunit L</fullName>
    </alternativeName>
</protein>